<evidence type="ECO:0000250" key="1">
    <source>
        <dbReference type="UniProtKB" id="P37268"/>
    </source>
</evidence>
<evidence type="ECO:0000255" key="2"/>
<evidence type="ECO:0000269" key="3">
    <source>
    </source>
</evidence>
<evidence type="ECO:0000305" key="4"/>
<proteinExistence type="evidence at protein level"/>
<reference key="1">
    <citation type="journal article" date="2011" name="Proc. Natl. Acad. Sci. U.S.A.">
        <title>Identification of unique mechanisms for triterpene biosynthesis in Botryococcus braunii.</title>
        <authorList>
            <person name="Niehaus T.D."/>
            <person name="Okada S."/>
            <person name="Devarenne T.P."/>
            <person name="Watt D.S."/>
            <person name="Sviripa V."/>
            <person name="Chappell J."/>
        </authorList>
    </citation>
    <scope>NUCLEOTIDE SEQUENCE [MRNA]</scope>
    <scope>FUNCTION</scope>
    <scope>CATALYTIC ACTIVITY</scope>
    <source>
        <strain>Race B</strain>
    </source>
</reference>
<protein>
    <recommendedName>
        <fullName>Botryococcus squalene synthase</fullName>
        <ecNumber>1.3.1.96</ecNumber>
    </recommendedName>
    <alternativeName>
        <fullName>Squalene synthase-like 2</fullName>
    </alternativeName>
</protein>
<keyword id="KW-0460">Magnesium</keyword>
<keyword id="KW-0472">Membrane</keyword>
<keyword id="KW-0479">Metal-binding</keyword>
<keyword id="KW-0521">NADP</keyword>
<keyword id="KW-0560">Oxidoreductase</keyword>
<keyword id="KW-0812">Transmembrane</keyword>
<keyword id="KW-1133">Transmembrane helix</keyword>
<dbReference type="EC" id="1.3.1.96"/>
<dbReference type="EMBL" id="HQ585059">
    <property type="protein sequence ID" value="AEL16716.1"/>
    <property type="molecule type" value="mRNA"/>
</dbReference>
<dbReference type="SMR" id="G0Y287"/>
<dbReference type="KEGG" id="ag:AEL16716"/>
<dbReference type="BioCyc" id="MetaCyc:MONOMER-17312"/>
<dbReference type="BRENDA" id="1.3.1.96">
    <property type="organism ID" value="915"/>
</dbReference>
<dbReference type="GO" id="GO:0005789">
    <property type="term" value="C:endoplasmic reticulum membrane"/>
    <property type="evidence" value="ECO:0007669"/>
    <property type="project" value="TreeGrafter"/>
</dbReference>
<dbReference type="GO" id="GO:0046872">
    <property type="term" value="F:metal ion binding"/>
    <property type="evidence" value="ECO:0007669"/>
    <property type="project" value="UniProtKB-KW"/>
</dbReference>
<dbReference type="GO" id="GO:0016491">
    <property type="term" value="F:oxidoreductase activity"/>
    <property type="evidence" value="ECO:0007669"/>
    <property type="project" value="UniProtKB-KW"/>
</dbReference>
<dbReference type="GO" id="GO:0051996">
    <property type="term" value="F:squalene synthase [NAD(P)H] activity"/>
    <property type="evidence" value="ECO:0007669"/>
    <property type="project" value="InterPro"/>
</dbReference>
<dbReference type="GO" id="GO:0045338">
    <property type="term" value="P:farnesyl diphosphate metabolic process"/>
    <property type="evidence" value="ECO:0007669"/>
    <property type="project" value="InterPro"/>
</dbReference>
<dbReference type="GO" id="GO:0008610">
    <property type="term" value="P:lipid biosynthetic process"/>
    <property type="evidence" value="ECO:0007669"/>
    <property type="project" value="InterPro"/>
</dbReference>
<dbReference type="CDD" id="cd00683">
    <property type="entry name" value="Trans_IPPS_HH"/>
    <property type="match status" value="1"/>
</dbReference>
<dbReference type="FunFam" id="1.10.600.10:FF:000023">
    <property type="entry name" value="Squalene synthase"/>
    <property type="match status" value="1"/>
</dbReference>
<dbReference type="Gene3D" id="1.10.600.10">
    <property type="entry name" value="Farnesyl Diphosphate Synthase"/>
    <property type="match status" value="1"/>
</dbReference>
<dbReference type="InterPro" id="IPR008949">
    <property type="entry name" value="Isoprenoid_synthase_dom_sf"/>
</dbReference>
<dbReference type="InterPro" id="IPR002060">
    <property type="entry name" value="Squ/phyt_synthse"/>
</dbReference>
<dbReference type="InterPro" id="IPR006449">
    <property type="entry name" value="Squal_synth-like"/>
</dbReference>
<dbReference type="InterPro" id="IPR044844">
    <property type="entry name" value="Trans_IPPS_euk-type"/>
</dbReference>
<dbReference type="InterPro" id="IPR033904">
    <property type="entry name" value="Trans_IPPS_HH"/>
</dbReference>
<dbReference type="NCBIfam" id="TIGR01559">
    <property type="entry name" value="squal_synth"/>
    <property type="match status" value="1"/>
</dbReference>
<dbReference type="PANTHER" id="PTHR11626">
    <property type="entry name" value="FARNESYL-DIPHOSPHATE FARNESYLTRANSFERASE"/>
    <property type="match status" value="1"/>
</dbReference>
<dbReference type="PANTHER" id="PTHR11626:SF2">
    <property type="entry name" value="SQUALENE SYNTHASE"/>
    <property type="match status" value="1"/>
</dbReference>
<dbReference type="Pfam" id="PF00494">
    <property type="entry name" value="SQS_PSY"/>
    <property type="match status" value="1"/>
</dbReference>
<dbReference type="SFLD" id="SFLDS00005">
    <property type="entry name" value="Isoprenoid_Synthase_Type_I"/>
    <property type="match status" value="1"/>
</dbReference>
<dbReference type="SFLD" id="SFLDG01018">
    <property type="entry name" value="Squalene/Phytoene_Synthase_Lik"/>
    <property type="match status" value="1"/>
</dbReference>
<dbReference type="SUPFAM" id="SSF48576">
    <property type="entry name" value="Terpenoid synthases"/>
    <property type="match status" value="1"/>
</dbReference>
<gene>
    <name type="primary">SSL-2</name>
</gene>
<comment type="function">
    <text evidence="3">Produces squalene when coexpressed with SSL-1 and bisfarnesyl ether and a very small amount of squalene when incubated alone in the presence of NADPH.</text>
</comment>
<comment type="catalytic activity">
    <reaction evidence="3">
        <text>presqualene diphosphate + NADPH + H(+) = squalene + diphosphate + NADP(+)</text>
        <dbReference type="Rhea" id="RHEA:22232"/>
        <dbReference type="ChEBI" id="CHEBI:15378"/>
        <dbReference type="ChEBI" id="CHEBI:15440"/>
        <dbReference type="ChEBI" id="CHEBI:33019"/>
        <dbReference type="ChEBI" id="CHEBI:57310"/>
        <dbReference type="ChEBI" id="CHEBI:57783"/>
        <dbReference type="ChEBI" id="CHEBI:58349"/>
        <dbReference type="EC" id="1.3.1.96"/>
    </reaction>
</comment>
<comment type="subcellular location">
    <subcellularLocation>
        <location evidence="4">Membrane</location>
        <topology evidence="2">Multi-pass membrane protein</topology>
    </subcellularLocation>
</comment>
<comment type="similarity">
    <text evidence="4">Belongs to the phytoene/squalene synthase family.</text>
</comment>
<organism>
    <name type="scientific">Botryococcus braunii</name>
    <name type="common">Green alga</name>
    <dbReference type="NCBI Taxonomy" id="38881"/>
    <lineage>
        <taxon>Eukaryota</taxon>
        <taxon>Viridiplantae</taxon>
        <taxon>Chlorophyta</taxon>
        <taxon>core chlorophytes</taxon>
        <taxon>Trebouxiophyceae</taxon>
        <taxon>Trebouxiophyceae incertae sedis</taxon>
        <taxon>Elliptochloris clade</taxon>
        <taxon>Botryococcus</taxon>
    </lineage>
</organism>
<name>BOSS_BOTBR</name>
<feature type="chain" id="PRO_0000421362" description="Botryococcus squalene synthase">
    <location>
        <begin position="1"/>
        <end position="465"/>
    </location>
</feature>
<feature type="transmembrane region" description="Helical" evidence="2">
    <location>
        <begin position="395"/>
        <end position="415"/>
    </location>
</feature>
<feature type="transmembrane region" description="Helical" evidence="2">
    <location>
        <begin position="429"/>
        <end position="449"/>
    </location>
</feature>
<feature type="binding site" evidence="1">
    <location>
        <position position="48"/>
    </location>
    <ligand>
        <name>NADP(+)</name>
        <dbReference type="ChEBI" id="CHEBI:58349"/>
    </ligand>
</feature>
<feature type="binding site" evidence="1">
    <location>
        <position position="73"/>
    </location>
    <ligand>
        <name>NADP(+)</name>
        <dbReference type="ChEBI" id="CHEBI:58349"/>
    </ligand>
</feature>
<feature type="binding site" evidence="1">
    <location>
        <position position="76"/>
    </location>
    <ligand>
        <name>Mg(2+)</name>
        <dbReference type="ChEBI" id="CHEBI:18420"/>
    </ligand>
</feature>
<feature type="binding site" evidence="1">
    <location>
        <position position="79"/>
    </location>
    <ligand>
        <name>Mg(2+)</name>
        <dbReference type="ChEBI" id="CHEBI:18420"/>
    </ligand>
</feature>
<feature type="binding site" evidence="1">
    <location>
        <position position="80"/>
    </location>
    <ligand>
        <name>Mg(2+)</name>
        <dbReference type="ChEBI" id="CHEBI:18420"/>
    </ligand>
</feature>
<feature type="binding site" evidence="1">
    <location>
        <position position="215"/>
    </location>
    <ligand>
        <name>NADP(+)</name>
        <dbReference type="ChEBI" id="CHEBI:58349"/>
    </ligand>
</feature>
<feature type="binding site" evidence="1">
    <location>
        <position position="315"/>
    </location>
    <ligand>
        <name>NADP(+)</name>
        <dbReference type="ChEBI" id="CHEBI:58349"/>
    </ligand>
</feature>
<feature type="binding site" evidence="1">
    <location>
        <position position="317"/>
    </location>
    <ligand>
        <name>NADP(+)</name>
        <dbReference type="ChEBI" id="CHEBI:58349"/>
    </ligand>
</feature>
<accession>G0Y287</accession>
<sequence>MVKLVEVLQHPDEIVPILQMLHKTYRAKRSYKDPGLAFCYGMLQRVSRSFSVVIQQLPDELRHPICVFYLILRALDTVEDDMNLPNEVKIPLLRTFHEHLFDRSWKLKCGYGPYVDLMENYPLVTDVFLTLSPGAQEVIRDSTRRMGNGMADFIGKDEVHSVAEYDLYCHYVAGLVGSAVAKIFVDSGLEKENLVAEVDLANNMGQFLQKTNVIRDYLEDINEEPAPRMFWPREIWGKYAQELADFKDPANEKAAVQCLNHMVTDALRHCEIGLNVIPLLQNIGILRSCLIPEVMGLRTLTLCYNNPQVFRGVVKMRRGETAKLFMSIYDKRSFYQTYLRLANELEAKCKGEASGDPMVATTLKHVHGIQKSCKAALSSKELLAKSGSALTDDPAIRLLLLVGVVAYFAYAFNLGDVRGEHGVRALGSILDLSQKGLAVASVALLLLVLLARSRLPLLTSASSKQ</sequence>